<comment type="function">
    <text>Protamines substitute for histones in the chromatin of sperm during the haploid phase of spermatogenesis. They compact sperm DNA into a highly condensed, stable and inactive complex.</text>
</comment>
<comment type="subcellular location">
    <subcellularLocation>
        <location>Nucleus</location>
    </subcellularLocation>
    <subcellularLocation>
        <location>Chromosome</location>
    </subcellularLocation>
</comment>
<comment type="tissue specificity">
    <text>Testis.</text>
</comment>
<comment type="similarity">
    <text evidence="2">Belongs to the protamine P1 family.</text>
</comment>
<sequence length="61" mass="7871">MARFRRSRSRSRSLYRRRRRSRRGGRQTRSRKLSRSRRRGRSRRRKGRRSRRSSRRSRRRN</sequence>
<accession>P35307</accession>
<keyword id="KW-0158">Chromosome</keyword>
<keyword id="KW-0217">Developmental protein</keyword>
<keyword id="KW-0221">Differentiation</keyword>
<keyword id="KW-0226">DNA condensation</keyword>
<keyword id="KW-0238">DNA-binding</keyword>
<keyword id="KW-0544">Nucleosome core</keyword>
<keyword id="KW-0539">Nucleus</keyword>
<keyword id="KW-1185">Reference proteome</keyword>
<keyword id="KW-0744">Spermatogenesis</keyword>
<protein>
    <recommendedName>
        <fullName>Sperm protamine P1</fullName>
    </recommendedName>
</protein>
<reference key="1">
    <citation type="journal article" date="1993" name="Eur. J. Biochem.">
        <title>Evolution of the monotremes. The sequences of the protamine P1 genes of platypus and echidna.</title>
        <authorList>
            <person name="Retief J.D."/>
            <person name="Winkfein R.J."/>
            <person name="Dixon G.H."/>
        </authorList>
    </citation>
    <scope>NUCLEOTIDE SEQUENCE [GENOMIC DNA]</scope>
</reference>
<evidence type="ECO:0000256" key="1">
    <source>
        <dbReference type="SAM" id="MobiDB-lite"/>
    </source>
</evidence>
<evidence type="ECO:0000305" key="2"/>
<proteinExistence type="evidence at transcript level"/>
<name>HSP1_ORNAN</name>
<organism>
    <name type="scientific">Ornithorhynchus anatinus</name>
    <name type="common">Duckbill platypus</name>
    <dbReference type="NCBI Taxonomy" id="9258"/>
    <lineage>
        <taxon>Eukaryota</taxon>
        <taxon>Metazoa</taxon>
        <taxon>Chordata</taxon>
        <taxon>Craniata</taxon>
        <taxon>Vertebrata</taxon>
        <taxon>Euteleostomi</taxon>
        <taxon>Mammalia</taxon>
        <taxon>Monotremata</taxon>
        <taxon>Ornithorhynchidae</taxon>
        <taxon>Ornithorhynchus</taxon>
    </lineage>
</organism>
<dbReference type="EMBL" id="Z26849">
    <property type="protein sequence ID" value="CAA81445.1"/>
    <property type="molecule type" value="Genomic_DNA"/>
</dbReference>
<dbReference type="PIR" id="S39425">
    <property type="entry name" value="S39425"/>
</dbReference>
<dbReference type="InParanoid" id="P35307"/>
<dbReference type="Proteomes" id="UP000002279">
    <property type="component" value="Unplaced"/>
</dbReference>
<dbReference type="GO" id="GO:0000786">
    <property type="term" value="C:nucleosome"/>
    <property type="evidence" value="ECO:0007669"/>
    <property type="project" value="UniProtKB-KW"/>
</dbReference>
<dbReference type="GO" id="GO:0005634">
    <property type="term" value="C:nucleus"/>
    <property type="evidence" value="ECO:0007669"/>
    <property type="project" value="UniProtKB-SubCell"/>
</dbReference>
<dbReference type="GO" id="GO:0003677">
    <property type="term" value="F:DNA binding"/>
    <property type="evidence" value="ECO:0007669"/>
    <property type="project" value="UniProtKB-KW"/>
</dbReference>
<dbReference type="GO" id="GO:0030261">
    <property type="term" value="P:chromosome condensation"/>
    <property type="evidence" value="ECO:0007669"/>
    <property type="project" value="UniProtKB-KW"/>
</dbReference>
<dbReference type="GO" id="GO:0035092">
    <property type="term" value="P:sperm DNA condensation"/>
    <property type="evidence" value="ECO:0007669"/>
    <property type="project" value="InterPro"/>
</dbReference>
<dbReference type="InterPro" id="IPR000221">
    <property type="entry name" value="Protamine_P1"/>
</dbReference>
<dbReference type="PROSITE" id="PS00048">
    <property type="entry name" value="PROTAMINE_P1"/>
    <property type="match status" value="1"/>
</dbReference>
<feature type="chain" id="PRO_0000191517" description="Sperm protamine P1">
    <location>
        <begin position="1"/>
        <end position="61"/>
    </location>
</feature>
<feature type="region of interest" description="Disordered" evidence="1">
    <location>
        <begin position="1"/>
        <end position="61"/>
    </location>
</feature>
<gene>
    <name type="primary">PRM1</name>
    <name type="synonym">PRM-1</name>
</gene>